<reference key="1">
    <citation type="submission" date="2000-09" db="EMBL/GenBank/DDBJ databases">
        <title>Identification of the rabbit Na+/K+ ATPase beta 3 subunit.</title>
        <authorList>
            <person name="Gumz M.L."/>
            <person name="Otto T.C."/>
            <person name="Cain B.D."/>
        </authorList>
    </citation>
    <scope>NUCLEOTIDE SEQUENCE [MRNA]</scope>
    <source>
        <tissue>Renal medulla</tissue>
    </source>
</reference>
<feature type="chain" id="PRO_0000265961" description="Sodium/potassium-transporting ATPase subunit beta-3">
    <location>
        <begin position="1"/>
        <end position="279"/>
    </location>
</feature>
<feature type="topological domain" description="Cytoplasmic" evidence="4">
    <location>
        <begin position="1"/>
        <end position="35"/>
    </location>
</feature>
<feature type="transmembrane region" description="Helical; Signal-anchor for type II membrane protein" evidence="4">
    <location>
        <begin position="36"/>
        <end position="56"/>
    </location>
</feature>
<feature type="topological domain" description="Extracellular" evidence="4">
    <location>
        <begin position="57"/>
        <end position="279"/>
    </location>
</feature>
<feature type="region of interest" description="immunoglobulin-like" evidence="1">
    <location>
        <begin position="186"/>
        <end position="279"/>
    </location>
</feature>
<feature type="glycosylation site" description="N-linked (GlcNAc...) asparagine" evidence="4">
    <location>
        <position position="124"/>
    </location>
</feature>
<feature type="glycosylation site" description="N-linked (GlcNAc...) asparagine" evidence="4">
    <location>
        <position position="240"/>
    </location>
</feature>
<feature type="disulfide bond" evidence="1">
    <location>
        <begin position="128"/>
        <end position="144"/>
    </location>
</feature>
<feature type="disulfide bond" evidence="1">
    <location>
        <begin position="154"/>
        <end position="170"/>
    </location>
</feature>
<feature type="disulfide bond" evidence="1">
    <location>
        <begin position="191"/>
        <end position="250"/>
    </location>
</feature>
<comment type="function">
    <text evidence="1">This is the non-catalytic component of the active enzyme, which catalyzes the hydrolysis of ATP coupled with the exchange of Na(+) and K(+) ions across the plasma membrane. The exact function of the beta-3 subunit is not known (By similarity).</text>
</comment>
<comment type="subunit">
    <text evidence="3">The sodium/potassium-transporting ATPase is composed of a catalytic alpha subunit, an auxiliary non-catalytic beta subunit and an additional regulatory subunit. Interacts with catalytic alpha subunit ATP12A.</text>
</comment>
<comment type="subcellular location">
    <subcellularLocation>
        <location evidence="3">Apical cell membrane</location>
        <topology evidence="4">Single-pass type II membrane protein</topology>
    </subcellularLocation>
    <subcellularLocation>
        <location evidence="3">Basolateral cell membrane</location>
        <topology evidence="4">Single-pass type II membrane protein</topology>
    </subcellularLocation>
    <subcellularLocation>
        <location evidence="2">Melanosome</location>
    </subcellularLocation>
    <text evidence="2">Identified by mass spectrometry in melanosome fractions from stage I to stage IV.</text>
</comment>
<comment type="domain">
    <text evidence="1">The C-terminal lobe folds into an immunoglobulin-like domain and may mediate cell adhesion properties.</text>
</comment>
<comment type="similarity">
    <text evidence="5">Belongs to the X(+)/potassium ATPases subunit beta family.</text>
</comment>
<sequence>MTKKEKKSFNQSLAEWKRFIYNPTSGEFLGRTAKSWGLILLFYLVFYGFLAALFTFTMWVMLQTLNDEVPKYRDQIPSPGLMVFPKPLSALEYTFSASDPSSYRGYIEDLRKFLKPYTLEEQKNLTVCPDGILSEQKGPVYVACQFPIFLLQACSGMSDPDFGYSQGSPCVLVKMNRIIGLKPEGTPRIECIPKDENVASISTYPNNGIIDLKYFPYYGKKLHVGYLQPLVAAQVIFSANSTKKEVTVECKIDGSPNLKNQDDRDKFLGRVAFKIIARA</sequence>
<organism>
    <name type="scientific">Oryctolagus cuniculus</name>
    <name type="common">Rabbit</name>
    <dbReference type="NCBI Taxonomy" id="9986"/>
    <lineage>
        <taxon>Eukaryota</taxon>
        <taxon>Metazoa</taxon>
        <taxon>Chordata</taxon>
        <taxon>Craniata</taxon>
        <taxon>Vertebrata</taxon>
        <taxon>Euteleostomi</taxon>
        <taxon>Mammalia</taxon>
        <taxon>Eutheria</taxon>
        <taxon>Euarchontoglires</taxon>
        <taxon>Glires</taxon>
        <taxon>Lagomorpha</taxon>
        <taxon>Leporidae</taxon>
        <taxon>Oryctolagus</taxon>
    </lineage>
</organism>
<proteinExistence type="evidence at transcript level"/>
<accession>Q9GLC3</accession>
<evidence type="ECO:0000250" key="1"/>
<evidence type="ECO:0000250" key="2">
    <source>
        <dbReference type="UniProtKB" id="P54709"/>
    </source>
</evidence>
<evidence type="ECO:0000250" key="3">
    <source>
        <dbReference type="UniProtKB" id="Q63377"/>
    </source>
</evidence>
<evidence type="ECO:0000255" key="4"/>
<evidence type="ECO:0000305" key="5"/>
<dbReference type="EMBL" id="AF302929">
    <property type="protein sequence ID" value="AAG21398.1"/>
    <property type="molecule type" value="mRNA"/>
</dbReference>
<dbReference type="RefSeq" id="NP_001075560.1">
    <property type="nucleotide sequence ID" value="NM_001082091.1"/>
</dbReference>
<dbReference type="SMR" id="Q9GLC3"/>
<dbReference type="FunCoup" id="Q9GLC3">
    <property type="interactions" value="471"/>
</dbReference>
<dbReference type="STRING" id="9986.ENSOCUP00000000299"/>
<dbReference type="GlyCosmos" id="Q9GLC3">
    <property type="glycosylation" value="2 sites, No reported glycans"/>
</dbReference>
<dbReference type="PaxDb" id="9986-ENSOCUP00000020337"/>
<dbReference type="GeneID" id="100008788"/>
<dbReference type="KEGG" id="ocu:100008788"/>
<dbReference type="CTD" id="483"/>
<dbReference type="InParanoid" id="Q9GLC3"/>
<dbReference type="OrthoDB" id="5912413at2759"/>
<dbReference type="Proteomes" id="UP000001811">
    <property type="component" value="Unplaced"/>
</dbReference>
<dbReference type="GO" id="GO:0016324">
    <property type="term" value="C:apical plasma membrane"/>
    <property type="evidence" value="ECO:0000250"/>
    <property type="project" value="UniProtKB"/>
</dbReference>
<dbReference type="GO" id="GO:0016323">
    <property type="term" value="C:basolateral plasma membrane"/>
    <property type="evidence" value="ECO:0000250"/>
    <property type="project" value="UniProtKB"/>
</dbReference>
<dbReference type="GO" id="GO:0042470">
    <property type="term" value="C:melanosome"/>
    <property type="evidence" value="ECO:0007669"/>
    <property type="project" value="UniProtKB-SubCell"/>
</dbReference>
<dbReference type="GO" id="GO:0005890">
    <property type="term" value="C:sodium:potassium-exchanging ATPase complex"/>
    <property type="evidence" value="ECO:0007669"/>
    <property type="project" value="InterPro"/>
</dbReference>
<dbReference type="GO" id="GO:0001671">
    <property type="term" value="F:ATPase activator activity"/>
    <property type="evidence" value="ECO:0007669"/>
    <property type="project" value="TreeGrafter"/>
</dbReference>
<dbReference type="GO" id="GO:0030007">
    <property type="term" value="P:intracellular potassium ion homeostasis"/>
    <property type="evidence" value="ECO:0007669"/>
    <property type="project" value="TreeGrafter"/>
</dbReference>
<dbReference type="GO" id="GO:0006883">
    <property type="term" value="P:intracellular sodium ion homeostasis"/>
    <property type="evidence" value="ECO:0007669"/>
    <property type="project" value="TreeGrafter"/>
</dbReference>
<dbReference type="GO" id="GO:1990573">
    <property type="term" value="P:potassium ion import across plasma membrane"/>
    <property type="evidence" value="ECO:0007669"/>
    <property type="project" value="TreeGrafter"/>
</dbReference>
<dbReference type="GO" id="GO:0036376">
    <property type="term" value="P:sodium ion export across plasma membrane"/>
    <property type="evidence" value="ECO:0007669"/>
    <property type="project" value="TreeGrafter"/>
</dbReference>
<dbReference type="FunFam" id="1.20.5.170:FF:000068">
    <property type="entry name" value="Sodium/potassium-transporting ATPase subunit beta"/>
    <property type="match status" value="1"/>
</dbReference>
<dbReference type="FunFam" id="2.60.40.1660:FF:000005">
    <property type="entry name" value="Sodium/potassium-transporting ATPase subunit beta"/>
    <property type="match status" value="1"/>
</dbReference>
<dbReference type="Gene3D" id="2.60.40.1660">
    <property type="entry name" value="Na, k-atpase alpha subunit"/>
    <property type="match status" value="1"/>
</dbReference>
<dbReference type="InterPro" id="IPR000402">
    <property type="entry name" value="Na/K_ATPase_sub_beta"/>
</dbReference>
<dbReference type="InterPro" id="IPR038702">
    <property type="entry name" value="Na/K_ATPase_sub_beta_sf"/>
</dbReference>
<dbReference type="NCBIfam" id="TIGR01107">
    <property type="entry name" value="Na_K_ATPase_bet"/>
    <property type="match status" value="1"/>
</dbReference>
<dbReference type="PANTHER" id="PTHR11523">
    <property type="entry name" value="SODIUM/POTASSIUM-DEPENDENT ATPASE BETA SUBUNIT"/>
    <property type="match status" value="1"/>
</dbReference>
<dbReference type="PANTHER" id="PTHR11523:SF47">
    <property type="entry name" value="SODIUM_POTASSIUM-TRANSPORTING ATPASE SUBUNIT BETA-3"/>
    <property type="match status" value="1"/>
</dbReference>
<dbReference type="Pfam" id="PF00287">
    <property type="entry name" value="Na_K-ATPase"/>
    <property type="match status" value="1"/>
</dbReference>
<dbReference type="PROSITE" id="PS00390">
    <property type="entry name" value="ATPASE_NA_K_BETA_1"/>
    <property type="match status" value="1"/>
</dbReference>
<protein>
    <recommendedName>
        <fullName>Sodium/potassium-transporting ATPase subunit beta-3</fullName>
    </recommendedName>
    <alternativeName>
        <fullName>Sodium/potassium-dependent ATPase subunit beta-3</fullName>
        <shortName>ATPB-3</shortName>
    </alternativeName>
    <cdAntigenName>CD298</cdAntigenName>
</protein>
<keyword id="KW-1003">Cell membrane</keyword>
<keyword id="KW-1015">Disulfide bond</keyword>
<keyword id="KW-0325">Glycoprotein</keyword>
<keyword id="KW-0406">Ion transport</keyword>
<keyword id="KW-0472">Membrane</keyword>
<keyword id="KW-0630">Potassium</keyword>
<keyword id="KW-0633">Potassium transport</keyword>
<keyword id="KW-1185">Reference proteome</keyword>
<keyword id="KW-0735">Signal-anchor</keyword>
<keyword id="KW-0915">Sodium</keyword>
<keyword id="KW-0739">Sodium transport</keyword>
<keyword id="KW-0740">Sodium/potassium transport</keyword>
<keyword id="KW-0812">Transmembrane</keyword>
<keyword id="KW-1133">Transmembrane helix</keyword>
<keyword id="KW-0813">Transport</keyword>
<name>AT1B3_RABIT</name>
<gene>
    <name type="primary">ATP1B3</name>
</gene>